<evidence type="ECO:0000255" key="1">
    <source>
        <dbReference type="PROSITE-ProRule" id="PRU00227"/>
    </source>
</evidence>
<evidence type="ECO:0000256" key="2">
    <source>
        <dbReference type="SAM" id="MobiDB-lite"/>
    </source>
</evidence>
<evidence type="ECO:0000269" key="3">
    <source>
    </source>
</evidence>
<evidence type="ECO:0000303" key="4">
    <source>
    </source>
</evidence>
<name>VDTR1_BYSSP</name>
<sequence>MSWQGHEGPKVKLRSACDRCSANKVKCTQEKPECERCRLLSLPCNYSRSMRIGKPPKSRQRGLSNIDPKTLMGGTVTKKLRPCPSAPESACRGSFEDGDGGPWTETMTFEEMLSRPSPPPFAGPSHNSNRPTNMASTNQDQYYHDKGKHGETMDEMLQTLVPDSVQFIEFPNTAREDQKQHPELRSEEEYSDYRSKSLFEEGLARIAPDCAGGIMDVLYGEEALVQMPNLPSSTHEGSSNTHVTSSHNCTRAVMENLAKLYQVCAPAGVENGSHPTTDQVLKANSDAMKDAADLLACPCAKDFCFPIILGITACRVLAWYQVVIDMYDPEIPMATMPTAREDIKHCPIAFGAYQLDEEVSQAMTSQFVLRNLRAMTRFVKTYVENFCSDINKNRPGSCSLIYRSLGTFMQTRLGNTIEQLEDRLAAFDGEYTKNIG</sequence>
<reference key="1">
    <citation type="journal article" date="2018" name="Front. Microbiol.">
        <title>Genomic and genetic insights into a cosmopolitan fungus, Paecilomyces variotii (Eurotiales).</title>
        <authorList>
            <person name="Urquhart A.S."/>
            <person name="Mondo S.J."/>
            <person name="Maekelae M.R."/>
            <person name="Hane J.K."/>
            <person name="Wiebenga A."/>
            <person name="He G."/>
            <person name="Mihaltcheva S."/>
            <person name="Pangilinan J."/>
            <person name="Lipzen A."/>
            <person name="Barry K."/>
            <person name="de Vries R.P."/>
            <person name="Grigoriev I.V."/>
            <person name="Idnurm A."/>
        </authorList>
    </citation>
    <scope>NUCLEOTIDE SEQUENCE [LARGE SCALE GENOMIC DNA]</scope>
    <source>
        <strain>ATCC 90900 / JCM 12815 / CBS 101075</strain>
    </source>
</reference>
<reference key="2">
    <citation type="journal article" date="2019" name="Fungal Biol. Biotechnol.">
        <title>The fungal gene cluster for biosynthesis of the antibacterial agent viriditoxin.</title>
        <authorList>
            <person name="Urquhart A.S."/>
            <person name="Hu J."/>
            <person name="Chooi Y.H."/>
            <person name="Idnurm A."/>
        </authorList>
    </citation>
    <scope>IDENTIFICATION</scope>
    <scope>FUNCTION</scope>
    <scope>DISRUPTION PHENOTYPE</scope>
</reference>
<keyword id="KW-0238">DNA-binding</keyword>
<keyword id="KW-0479">Metal-binding</keyword>
<keyword id="KW-0539">Nucleus</keyword>
<keyword id="KW-1185">Reference proteome</keyword>
<keyword id="KW-0804">Transcription</keyword>
<keyword id="KW-0805">Transcription regulation</keyword>
<keyword id="KW-0862">Zinc</keyword>
<protein>
    <recommendedName>
        <fullName evidence="4">Transcriptional regulator VdtR</fullName>
    </recommendedName>
    <alternativeName>
        <fullName evidence="4">Viriditoxin biosynthesis cluster protein R</fullName>
    </alternativeName>
</protein>
<organism>
    <name type="scientific">Byssochlamys spectabilis</name>
    <name type="common">Paecilomyces variotii</name>
    <dbReference type="NCBI Taxonomy" id="264951"/>
    <lineage>
        <taxon>Eukaryota</taxon>
        <taxon>Fungi</taxon>
        <taxon>Dikarya</taxon>
        <taxon>Ascomycota</taxon>
        <taxon>Pezizomycotina</taxon>
        <taxon>Eurotiomycetes</taxon>
        <taxon>Eurotiomycetidae</taxon>
        <taxon>Eurotiales</taxon>
        <taxon>Thermoascaceae</taxon>
        <taxon>Paecilomyces</taxon>
    </lineage>
</organism>
<comment type="function">
    <text evidence="3">Transcription factor that regulates expression of the viriditoxin biosynthesis cluster and viriditoxin synthesis.</text>
</comment>
<comment type="subcellular location">
    <subcellularLocation>
        <location evidence="1">Nucleus</location>
    </subcellularLocation>
</comment>
<comment type="disruption phenotype">
    <text evidence="3">Leads to reduced transcript levels of genes in the viriditoxin biosynthesis cluster and the loss of the ability to synthesize viriditoxin.</text>
</comment>
<feature type="chain" id="PRO_0000448348" description="Transcriptional regulator VdtR">
    <location>
        <begin position="1"/>
        <end position="436"/>
    </location>
</feature>
<feature type="DNA-binding region" description="Zn(2)-C6 fungal-type" evidence="1">
    <location>
        <begin position="17"/>
        <end position="44"/>
    </location>
</feature>
<feature type="region of interest" description="Disordered" evidence="2">
    <location>
        <begin position="51"/>
        <end position="147"/>
    </location>
</feature>
<feature type="region of interest" description="Disordered" evidence="2">
    <location>
        <begin position="173"/>
        <end position="192"/>
    </location>
</feature>
<feature type="compositionally biased region" description="Polar residues" evidence="2">
    <location>
        <begin position="125"/>
        <end position="141"/>
    </location>
</feature>
<feature type="compositionally biased region" description="Basic and acidic residues" evidence="2">
    <location>
        <begin position="174"/>
        <end position="192"/>
    </location>
</feature>
<dbReference type="EMBL" id="RCNU01000014">
    <property type="protein sequence ID" value="RWQ92173.1"/>
    <property type="molecule type" value="Genomic_DNA"/>
</dbReference>
<dbReference type="SMR" id="A0A443HK05"/>
<dbReference type="VEuPathDB" id="FungiDB:C8Q69DRAFT_105452"/>
<dbReference type="Proteomes" id="UP000283841">
    <property type="component" value="Unassembled WGS sequence"/>
</dbReference>
<dbReference type="GO" id="GO:0005634">
    <property type="term" value="C:nucleus"/>
    <property type="evidence" value="ECO:0007669"/>
    <property type="project" value="UniProtKB-SubCell"/>
</dbReference>
<dbReference type="GO" id="GO:0000981">
    <property type="term" value="F:DNA-binding transcription factor activity, RNA polymerase II-specific"/>
    <property type="evidence" value="ECO:0007669"/>
    <property type="project" value="InterPro"/>
</dbReference>
<dbReference type="GO" id="GO:0043565">
    <property type="term" value="F:sequence-specific DNA binding"/>
    <property type="evidence" value="ECO:0007669"/>
    <property type="project" value="TreeGrafter"/>
</dbReference>
<dbReference type="GO" id="GO:0008270">
    <property type="term" value="F:zinc ion binding"/>
    <property type="evidence" value="ECO:0007669"/>
    <property type="project" value="InterPro"/>
</dbReference>
<dbReference type="GO" id="GO:0045122">
    <property type="term" value="P:aflatoxin biosynthetic process"/>
    <property type="evidence" value="ECO:0007669"/>
    <property type="project" value="InterPro"/>
</dbReference>
<dbReference type="GO" id="GO:0045944">
    <property type="term" value="P:positive regulation of transcription by RNA polymerase II"/>
    <property type="evidence" value="ECO:0007669"/>
    <property type="project" value="TreeGrafter"/>
</dbReference>
<dbReference type="CDD" id="cd00067">
    <property type="entry name" value="GAL4"/>
    <property type="match status" value="1"/>
</dbReference>
<dbReference type="Gene3D" id="4.10.240.10">
    <property type="entry name" value="Zn(2)-C6 fungal-type DNA-binding domain"/>
    <property type="match status" value="1"/>
</dbReference>
<dbReference type="InterPro" id="IPR013700">
    <property type="entry name" value="AflR"/>
</dbReference>
<dbReference type="InterPro" id="IPR051711">
    <property type="entry name" value="Stress_Response_Reg"/>
</dbReference>
<dbReference type="InterPro" id="IPR036864">
    <property type="entry name" value="Zn2-C6_fun-type_DNA-bd_sf"/>
</dbReference>
<dbReference type="InterPro" id="IPR001138">
    <property type="entry name" value="Zn2Cys6_DnaBD"/>
</dbReference>
<dbReference type="PANTHER" id="PTHR47540">
    <property type="entry name" value="THIAMINE REPRESSIBLE GENES REGULATORY PROTEIN THI5"/>
    <property type="match status" value="1"/>
</dbReference>
<dbReference type="PANTHER" id="PTHR47540:SF2">
    <property type="entry name" value="ZN(II)2CYS6 TRANSCRIPTION FACTOR (EUROFUNG)"/>
    <property type="match status" value="1"/>
</dbReference>
<dbReference type="Pfam" id="PF08493">
    <property type="entry name" value="AflR"/>
    <property type="match status" value="1"/>
</dbReference>
<dbReference type="Pfam" id="PF00172">
    <property type="entry name" value="Zn_clus"/>
    <property type="match status" value="1"/>
</dbReference>
<dbReference type="PRINTS" id="PR00755">
    <property type="entry name" value="AFLATOXINBRP"/>
</dbReference>
<dbReference type="SMART" id="SM00066">
    <property type="entry name" value="GAL4"/>
    <property type="match status" value="1"/>
</dbReference>
<dbReference type="SUPFAM" id="SSF57701">
    <property type="entry name" value="Zn2/Cys6 DNA-binding domain"/>
    <property type="match status" value="1"/>
</dbReference>
<dbReference type="PROSITE" id="PS00463">
    <property type="entry name" value="ZN2_CY6_FUNGAL_1"/>
    <property type="match status" value="1"/>
</dbReference>
<dbReference type="PROSITE" id="PS50048">
    <property type="entry name" value="ZN2_CY6_FUNGAL_2"/>
    <property type="match status" value="1"/>
</dbReference>
<accession>A0A443HK05</accession>
<proteinExistence type="inferred from homology"/>
<gene>
    <name evidence="4" type="primary">VdtR</name>
    <name type="ORF">C8Q69DRAFT_105452</name>
</gene>